<protein>
    <recommendedName>
        <fullName evidence="1">Bifunctional pantoate ligase/cytidylate kinase</fullName>
    </recommendedName>
    <domain>
        <recommendedName>
            <fullName evidence="1">Pantothenate synthetase</fullName>
            <shortName evidence="1">PS</shortName>
            <ecNumber evidence="1">6.3.2.1</ecNumber>
        </recommendedName>
        <alternativeName>
            <fullName evidence="1">Pantoate--beta-alanine ligase</fullName>
        </alternativeName>
        <alternativeName>
            <fullName evidence="1">Pantoate-activating enzyme</fullName>
        </alternativeName>
    </domain>
    <domain>
        <recommendedName>
            <fullName evidence="1">Cytidylate kinase</fullName>
            <shortName evidence="1">CK</shortName>
            <ecNumber evidence="1">2.7.4.25</ecNumber>
        </recommendedName>
        <alternativeName>
            <fullName evidence="1">Cytidine monophosphate kinase</fullName>
            <shortName evidence="1">CMP kinase</shortName>
        </alternativeName>
    </domain>
</protein>
<sequence length="490" mass="53061">MGGLHQGHARLIATAVTSCGGKGSVLVSTFVNPLQFGVDEDFDCYPRTFEDDCALAEQAGASALWCPDERQVYPYGTSEGWRLQAPARLTAHLCGPWRSGHFDGVVTVVMRLLGLVRPHQLWLGEKDWQQLTILRHLVNDFGLRVRVRGCPTVREGDGLAASSRNRYLGDAQRTVASAFSSALCATARDVCAGSVDEASAQVALRQQLREAGLEVEYVETVDPVTLQPARPGRSIRLLAAAVRCGETRLIDHVFIMTRSPIVAIDGPAGAGKSTVTRAFAERMGLLYLDTGAMYRAVTWWVQSNGADPSSAPAVEALLEGLEVDLSPLKDGVQTVRVNGRDITDAIRDPEVTGSVSLVAAHPCVRALLTKQQQRLGERGGLVAEGRDIGTAVFPDADVKVFLTATPEERARRRAKDLEARGHAVPDLAALEAQIVERDRLDSTREVAPLVQADDATELITDGMSIEAVIDALEDLFRFRVAKEIWPTPQG</sequence>
<reference key="1">
    <citation type="submission" date="2006-05" db="EMBL/GenBank/DDBJ databases">
        <authorList>
            <consortium name="Genoscope"/>
        </authorList>
    </citation>
    <scope>NUCLEOTIDE SEQUENCE [LARGE SCALE GENOMIC DNA]</scope>
    <source>
        <strain>WH7803</strain>
    </source>
</reference>
<evidence type="ECO:0000255" key="1">
    <source>
        <dbReference type="HAMAP-Rule" id="MF_01349"/>
    </source>
</evidence>
<organism>
    <name type="scientific">Synechococcus sp. (strain WH7803)</name>
    <dbReference type="NCBI Taxonomy" id="32051"/>
    <lineage>
        <taxon>Bacteria</taxon>
        <taxon>Bacillati</taxon>
        <taxon>Cyanobacteriota</taxon>
        <taxon>Cyanophyceae</taxon>
        <taxon>Synechococcales</taxon>
        <taxon>Synechococcaceae</taxon>
        <taxon>Synechococcus</taxon>
    </lineage>
</organism>
<dbReference type="EC" id="6.3.2.1" evidence="1"/>
<dbReference type="EC" id="2.7.4.25" evidence="1"/>
<dbReference type="EMBL" id="CT971583">
    <property type="protein sequence ID" value="CAK22900.1"/>
    <property type="molecule type" value="Genomic_DNA"/>
</dbReference>
<dbReference type="SMR" id="A5GIY5"/>
<dbReference type="STRING" id="32051.SynWH7803_0474"/>
<dbReference type="KEGG" id="syx:SynWH7803_0474"/>
<dbReference type="eggNOG" id="COG0283">
    <property type="taxonomic scope" value="Bacteria"/>
</dbReference>
<dbReference type="eggNOG" id="COG0414">
    <property type="taxonomic scope" value="Bacteria"/>
</dbReference>
<dbReference type="HOGENOM" id="CLU_037427_0_0_3"/>
<dbReference type="UniPathway" id="UPA00028">
    <property type="reaction ID" value="UER00005"/>
</dbReference>
<dbReference type="Proteomes" id="UP000001566">
    <property type="component" value="Chromosome"/>
</dbReference>
<dbReference type="GO" id="GO:0005829">
    <property type="term" value="C:cytosol"/>
    <property type="evidence" value="ECO:0007669"/>
    <property type="project" value="TreeGrafter"/>
</dbReference>
<dbReference type="GO" id="GO:0005524">
    <property type="term" value="F:ATP binding"/>
    <property type="evidence" value="ECO:0007669"/>
    <property type="project" value="UniProtKB-UniRule"/>
</dbReference>
<dbReference type="GO" id="GO:0036430">
    <property type="term" value="F:CMP kinase activity"/>
    <property type="evidence" value="ECO:0007669"/>
    <property type="project" value="RHEA"/>
</dbReference>
<dbReference type="GO" id="GO:0036431">
    <property type="term" value="F:dCMP kinase activity"/>
    <property type="evidence" value="ECO:0007669"/>
    <property type="project" value="RHEA"/>
</dbReference>
<dbReference type="GO" id="GO:0004592">
    <property type="term" value="F:pantoate-beta-alanine ligase activity"/>
    <property type="evidence" value="ECO:0007669"/>
    <property type="project" value="UniProtKB-UniRule"/>
</dbReference>
<dbReference type="GO" id="GO:0015949">
    <property type="term" value="P:nucleobase-containing small molecule interconversion"/>
    <property type="evidence" value="ECO:0007669"/>
    <property type="project" value="TreeGrafter"/>
</dbReference>
<dbReference type="GO" id="GO:0015940">
    <property type="term" value="P:pantothenate biosynthetic process"/>
    <property type="evidence" value="ECO:0007669"/>
    <property type="project" value="UniProtKB-UniRule"/>
</dbReference>
<dbReference type="GO" id="GO:0006220">
    <property type="term" value="P:pyrimidine nucleotide metabolic process"/>
    <property type="evidence" value="ECO:0007669"/>
    <property type="project" value="UniProtKB-UniRule"/>
</dbReference>
<dbReference type="CDD" id="cd02020">
    <property type="entry name" value="CMPK"/>
    <property type="match status" value="1"/>
</dbReference>
<dbReference type="Gene3D" id="3.40.50.620">
    <property type="entry name" value="HUPs"/>
    <property type="match status" value="1"/>
</dbReference>
<dbReference type="Gene3D" id="3.40.50.300">
    <property type="entry name" value="P-loop containing nucleotide triphosphate hydrolases"/>
    <property type="match status" value="1"/>
</dbReference>
<dbReference type="Gene3D" id="3.30.1300.10">
    <property type="entry name" value="Pantoate-beta-alanine ligase, C-terminal domain"/>
    <property type="match status" value="1"/>
</dbReference>
<dbReference type="HAMAP" id="MF_00238">
    <property type="entry name" value="Cytidyl_kinase_type1"/>
    <property type="match status" value="1"/>
</dbReference>
<dbReference type="HAMAP" id="MF_00158">
    <property type="entry name" value="PanC"/>
    <property type="match status" value="1"/>
</dbReference>
<dbReference type="HAMAP" id="MF_01349">
    <property type="entry name" value="PanCY"/>
    <property type="match status" value="1"/>
</dbReference>
<dbReference type="InterPro" id="IPR003136">
    <property type="entry name" value="Cytidylate_kin"/>
</dbReference>
<dbReference type="InterPro" id="IPR011994">
    <property type="entry name" value="Cytidylate_kinase_dom"/>
</dbReference>
<dbReference type="InterPro" id="IPR027417">
    <property type="entry name" value="P-loop_NTPase"/>
</dbReference>
<dbReference type="InterPro" id="IPR003721">
    <property type="entry name" value="Pantoate_ligase"/>
</dbReference>
<dbReference type="InterPro" id="IPR024894">
    <property type="entry name" value="Pantoate_ligase/cytidylate_kin"/>
</dbReference>
<dbReference type="InterPro" id="IPR042176">
    <property type="entry name" value="Pantoate_ligase_C"/>
</dbReference>
<dbReference type="InterPro" id="IPR014729">
    <property type="entry name" value="Rossmann-like_a/b/a_fold"/>
</dbReference>
<dbReference type="NCBIfam" id="TIGR00017">
    <property type="entry name" value="cmk"/>
    <property type="match status" value="1"/>
</dbReference>
<dbReference type="NCBIfam" id="TIGR00018">
    <property type="entry name" value="panC"/>
    <property type="match status" value="1"/>
</dbReference>
<dbReference type="NCBIfam" id="NF010004">
    <property type="entry name" value="PRK13477.1"/>
    <property type="match status" value="1"/>
</dbReference>
<dbReference type="PANTHER" id="PTHR21299:SF2">
    <property type="entry name" value="CYTIDYLATE KINASE"/>
    <property type="match status" value="1"/>
</dbReference>
<dbReference type="PANTHER" id="PTHR21299">
    <property type="entry name" value="CYTIDYLATE KINASE/PANTOATE-BETA-ALANINE LIGASE"/>
    <property type="match status" value="1"/>
</dbReference>
<dbReference type="Pfam" id="PF02224">
    <property type="entry name" value="Cytidylate_kin"/>
    <property type="match status" value="1"/>
</dbReference>
<dbReference type="Pfam" id="PF02569">
    <property type="entry name" value="Pantoate_ligase"/>
    <property type="match status" value="1"/>
</dbReference>
<dbReference type="SUPFAM" id="SSF52374">
    <property type="entry name" value="Nucleotidylyl transferase"/>
    <property type="match status" value="1"/>
</dbReference>
<dbReference type="SUPFAM" id="SSF52540">
    <property type="entry name" value="P-loop containing nucleoside triphosphate hydrolases"/>
    <property type="match status" value="1"/>
</dbReference>
<gene>
    <name evidence="1" type="primary">panC/cmk</name>
    <name type="ordered locus">SynWH7803_0474</name>
</gene>
<proteinExistence type="inferred from homology"/>
<accession>A5GIY5</accession>
<feature type="chain" id="PRO_0000333302" description="Bifunctional pantoate ligase/cytidylate kinase">
    <location>
        <begin position="1"/>
        <end position="490"/>
    </location>
</feature>
<feature type="region of interest" description="Pantoate--beta-alanine ligase">
    <location>
        <begin position="1"/>
        <end position="253"/>
    </location>
</feature>
<feature type="region of interest" description="Cytidylate kinase" evidence="1">
    <location>
        <begin position="254"/>
        <end position="490"/>
    </location>
</feature>
<feature type="active site" description="Proton donor" evidence="1">
    <location>
        <position position="8"/>
    </location>
</feature>
<feature type="binding site" evidence="1">
    <location>
        <begin position="1"/>
        <end position="8"/>
    </location>
    <ligand>
        <name>ATP</name>
        <dbReference type="ChEBI" id="CHEBI:30616"/>
    </ligand>
</feature>
<feature type="binding site" evidence="1">
    <location>
        <position position="35"/>
    </location>
    <ligand>
        <name>(R)-pantoate</name>
        <dbReference type="ChEBI" id="CHEBI:15980"/>
    </ligand>
</feature>
<feature type="binding site" evidence="1">
    <location>
        <position position="35"/>
    </location>
    <ligand>
        <name>beta-alanine</name>
        <dbReference type="ChEBI" id="CHEBI:57966"/>
    </ligand>
</feature>
<feature type="binding site" evidence="1">
    <location>
        <begin position="124"/>
        <end position="127"/>
    </location>
    <ligand>
        <name>ATP</name>
        <dbReference type="ChEBI" id="CHEBI:30616"/>
    </ligand>
</feature>
<feature type="binding site" evidence="1">
    <location>
        <position position="130"/>
    </location>
    <ligand>
        <name>(R)-pantoate</name>
        <dbReference type="ChEBI" id="CHEBI:15980"/>
    </ligand>
</feature>
<feature type="binding site" evidence="1">
    <location>
        <position position="153"/>
    </location>
    <ligand>
        <name>ATP</name>
        <dbReference type="ChEBI" id="CHEBI:30616"/>
    </ligand>
</feature>
<feature type="binding site" evidence="1">
    <location>
        <begin position="161"/>
        <end position="164"/>
    </location>
    <ligand>
        <name>ATP</name>
        <dbReference type="ChEBI" id="CHEBI:30616"/>
    </ligand>
</feature>
<comment type="function">
    <text evidence="1">Catalyzes the condensation of pantoate with beta-alanine in an ATP-dependent reaction via a pantoyl-adenylate intermediate.</text>
</comment>
<comment type="function">
    <text evidence="1">Catalyzes the transfer of a phosphate group from ATP to either CMP or dCMP to form CDP or dCDP and ADP, respectively.</text>
</comment>
<comment type="catalytic activity">
    <reaction evidence="1">
        <text>(R)-pantoate + beta-alanine + ATP = (R)-pantothenate + AMP + diphosphate + H(+)</text>
        <dbReference type="Rhea" id="RHEA:10912"/>
        <dbReference type="ChEBI" id="CHEBI:15378"/>
        <dbReference type="ChEBI" id="CHEBI:15980"/>
        <dbReference type="ChEBI" id="CHEBI:29032"/>
        <dbReference type="ChEBI" id="CHEBI:30616"/>
        <dbReference type="ChEBI" id="CHEBI:33019"/>
        <dbReference type="ChEBI" id="CHEBI:57966"/>
        <dbReference type="ChEBI" id="CHEBI:456215"/>
        <dbReference type="EC" id="6.3.2.1"/>
    </reaction>
</comment>
<comment type="catalytic activity">
    <reaction evidence="1">
        <text>CMP + ATP = CDP + ADP</text>
        <dbReference type="Rhea" id="RHEA:11600"/>
        <dbReference type="ChEBI" id="CHEBI:30616"/>
        <dbReference type="ChEBI" id="CHEBI:58069"/>
        <dbReference type="ChEBI" id="CHEBI:60377"/>
        <dbReference type="ChEBI" id="CHEBI:456216"/>
        <dbReference type="EC" id="2.7.4.25"/>
    </reaction>
</comment>
<comment type="catalytic activity">
    <reaction evidence="1">
        <text>dCMP + ATP = dCDP + ADP</text>
        <dbReference type="Rhea" id="RHEA:25094"/>
        <dbReference type="ChEBI" id="CHEBI:30616"/>
        <dbReference type="ChEBI" id="CHEBI:57566"/>
        <dbReference type="ChEBI" id="CHEBI:58593"/>
        <dbReference type="ChEBI" id="CHEBI:456216"/>
        <dbReference type="EC" id="2.7.4.25"/>
    </reaction>
</comment>
<comment type="pathway">
    <text evidence="1">Cofactor biosynthesis; (R)-pantothenate biosynthesis; (R)-pantothenate from (R)-pantoate and beta-alanine: step 1/1.</text>
</comment>
<comment type="subcellular location">
    <subcellularLocation>
        <location evidence="1">Cytoplasm</location>
    </subcellularLocation>
</comment>
<comment type="similarity">
    <text evidence="1">In the N-terminal section; belongs to the pantothenate synthetase family.</text>
</comment>
<comment type="similarity">
    <text evidence="1">In the C-terminal section; belongs to the cytidylate kinase family. Type 1 subfamily.</text>
</comment>
<keyword id="KW-0067">ATP-binding</keyword>
<keyword id="KW-0963">Cytoplasm</keyword>
<keyword id="KW-0418">Kinase</keyword>
<keyword id="KW-0436">Ligase</keyword>
<keyword id="KW-0511">Multifunctional enzyme</keyword>
<keyword id="KW-0547">Nucleotide-binding</keyword>
<keyword id="KW-0566">Pantothenate biosynthesis</keyword>
<keyword id="KW-1185">Reference proteome</keyword>
<keyword id="KW-0808">Transferase</keyword>
<name>PANCY_SYNPW</name>